<proteinExistence type="evidence at protein level"/>
<keyword id="KW-0025">Alternative splicing</keyword>
<keyword id="KW-1003">Cell membrane</keyword>
<keyword id="KW-0966">Cell projection</keyword>
<keyword id="KW-0969">Cilium</keyword>
<keyword id="KW-1015">Disulfide bond</keyword>
<keyword id="KW-0282">Flagellum</keyword>
<keyword id="KW-0325">Glycoprotein</keyword>
<keyword id="KW-0472">Membrane</keyword>
<keyword id="KW-1267">Proteomics identification</keyword>
<keyword id="KW-1185">Reference proteome</keyword>
<keyword id="KW-0732">Signal</keyword>
<keyword id="KW-0812">Transmembrane</keyword>
<keyword id="KW-1133">Transmembrane helix</keyword>
<feature type="signal peptide" evidence="3">
    <location>
        <begin position="1"/>
        <end position="19"/>
    </location>
</feature>
<feature type="chain" id="PRO_0000251216" description="Cation channel sperm-associated auxiliary subunit epsilon">
    <location>
        <begin position="20"/>
        <end position="951"/>
    </location>
</feature>
<feature type="topological domain" description="Extracellular" evidence="1">
    <location>
        <begin position="20"/>
        <end position="903"/>
    </location>
</feature>
<feature type="transmembrane region" description="Helical" evidence="1">
    <location>
        <begin position="904"/>
        <end position="924"/>
    </location>
</feature>
<feature type="topological domain" description="Cytoplasmic" evidence="1">
    <location>
        <begin position="925"/>
        <end position="951"/>
    </location>
</feature>
<feature type="glycosylation site" description="N-linked (GlcNAc...) asparagine" evidence="3">
    <location>
        <position position="61"/>
    </location>
</feature>
<feature type="glycosylation site" description="N-linked (GlcNAc...) asparagine" evidence="3">
    <location>
        <position position="114"/>
    </location>
</feature>
<feature type="glycosylation site" description="N-linked (GlcNAc...) asparagine" evidence="3">
    <location>
        <position position="414"/>
    </location>
</feature>
<feature type="glycosylation site" description="N-linked (GlcNAc...) asparagine" evidence="3">
    <location>
        <position position="472"/>
    </location>
</feature>
<feature type="glycosylation site" description="N-linked (GlcNAc...) asparagine" evidence="3">
    <location>
        <position position="487"/>
    </location>
</feature>
<feature type="glycosylation site" description="N-linked (GlcNAc...) asparagine" evidence="3">
    <location>
        <position position="493"/>
    </location>
</feature>
<feature type="glycosylation site" description="N-linked (GlcNAc...) asparagine" evidence="3">
    <location>
        <position position="535"/>
    </location>
</feature>
<feature type="glycosylation site" description="N-linked (GlcNAc...) asparagine" evidence="3">
    <location>
        <position position="796"/>
    </location>
</feature>
<feature type="glycosylation site" description="N-linked (GlcNAc...) asparagine" evidence="3">
    <location>
        <position position="854"/>
    </location>
</feature>
<feature type="glycosylation site" description="N-linked (GlcNAc...) asparagine" evidence="3">
    <location>
        <position position="881"/>
    </location>
</feature>
<feature type="glycosylation site" description="N-linked (GlcNAc...) asparagine" evidence="3">
    <location>
        <position position="886"/>
    </location>
</feature>
<feature type="disulfide bond" evidence="1">
    <location>
        <begin position="57"/>
        <end position="71"/>
    </location>
</feature>
<feature type="disulfide bond" evidence="1">
    <location>
        <begin position="101"/>
        <end position="206"/>
    </location>
</feature>
<feature type="disulfide bond" evidence="1">
    <location>
        <begin position="246"/>
        <end position="336"/>
    </location>
</feature>
<feature type="disulfide bond" evidence="1">
    <location>
        <begin position="410"/>
        <end position="413"/>
    </location>
</feature>
<feature type="disulfide bond" evidence="1">
    <location>
        <begin position="583"/>
        <end position="690"/>
    </location>
</feature>
<feature type="disulfide bond" evidence="1">
    <location>
        <begin position="703"/>
        <end position="885"/>
    </location>
</feature>
<feature type="disulfide bond" evidence="1">
    <location>
        <begin position="719"/>
        <end position="752"/>
    </location>
</feature>
<feature type="disulfide bond" evidence="1">
    <location>
        <begin position="804"/>
        <end position="835"/>
    </location>
</feature>
<feature type="splice variant" id="VSP_044251" description="In isoform 3." evidence="6">
    <location>
        <begin position="1"/>
        <end position="151"/>
    </location>
</feature>
<feature type="splice variant" id="VSP_020748" description="In isoform 2." evidence="7">
    <original>NY</original>
    <variation>FL</variation>
    <location>
        <begin position="831"/>
        <end position="832"/>
    </location>
</feature>
<feature type="splice variant" id="VSP_020749" description="In isoform 2." evidence="7">
    <location>
        <begin position="833"/>
        <end position="951"/>
    </location>
</feature>
<feature type="sequence variant" id="VAR_061566" description="In dbSNP:rs58602830.">
    <original>T</original>
    <variation>S</variation>
    <location>
        <position position="56"/>
    </location>
</feature>
<feature type="sequence variant" id="VAR_027661" description="In dbSNP:rs11586356.">
    <original>T</original>
    <variation>K</variation>
    <location>
        <position position="66"/>
    </location>
</feature>
<feature type="sequence variant" id="VAR_035494" description="In a breast cancer sample; somatic mutation." evidence="4">
    <original>T</original>
    <variation>I</variation>
    <location>
        <position position="653"/>
    </location>
</feature>
<gene>
    <name evidence="9" type="primary">CATSPERE</name>
    <name evidence="9" type="synonym">C1orf101</name>
</gene>
<sequence length="951" mass="109662">MSAREVAVLLLWLSCYGSALWRYSTNSPNYRIFSTRSTIKLEYEGTLFTEWSVPETCFVLNKSSPTTELRCSSPGVHAIKPIVTGPDEEERYLFVESSHTCFLWYYRVRHFFNNFTQLITVWAYDPESADPDELLGNAEEPSINSIVLSTQMATLGQKPVIHTVLKRKVYSSNEKMRRGTWRIVVPMTKDDALKEIRGNQVTFQDCFIADFLILLTFPLLTIPEIPGYLPISSPRGSQLMASWDACVVASAVLVTDMETFHTTDSFKSWTRIRVPPDILSDDERRSVAHVILSRDGIVFLINGVLYIKSFRGFIRLGGIVNLPDGGITGISSRKWCWVNYLLKAKGRRSTFAVWTENEIYLGSILLKFARLVTTTELKNILSLSVTATLTIDRVEYTGHPLEIAVFLNYCTVCNVTKKIFLVIYNEDTKQWVSQDFTLDAPIDSVTMPHFTFSALPGLLLWNKHSIYYCYHNFTFTGILQTPAGHGNLSMLSNDSIIHEVFIDYYGDILVKMENNVIFYSKINTRDAVKLHLWTNYTTRAFIFLSTSGQTYFLYALDDGTIQIQDYPLHLEAQSIAFTTKDKCPYMAFHNNVAHVFYFLDKGEALTVWTQIVYPENTGLYVIVESYGPKILQESHEISFEAAFGYCTKTLTLTFYQNVDYERISDYFETQDKHTGLVLVQFRPSEYSKACPIAQKVFQIAVGCDDKKFIAIKGFSKKGCHHHDFSYVIEKSYLRHQPSKNLRVRYIWGEYGCPLRLDFTEKFQPVVQLFDDNGYVKDVEANFIVWEIHGRDDYSFNNTMAQSGCLHEAQTWKSMIELNKHLPLEEVWGPENYKHCFSYAIGKPGDLNQPYEIINSSNGNHIFWPMGHSGMYVFRVKILDPNYSFCNLTAMFAIETFGLIPSPSVYLVASFLFVLMLLFFTILVLSYFRYMRIYRRYIYEPLHKPQRKRKKN</sequence>
<organism>
    <name type="scientific">Homo sapiens</name>
    <name type="common">Human</name>
    <dbReference type="NCBI Taxonomy" id="9606"/>
    <lineage>
        <taxon>Eukaryota</taxon>
        <taxon>Metazoa</taxon>
        <taxon>Chordata</taxon>
        <taxon>Craniata</taxon>
        <taxon>Vertebrata</taxon>
        <taxon>Euteleostomi</taxon>
        <taxon>Mammalia</taxon>
        <taxon>Eutheria</taxon>
        <taxon>Euarchontoglires</taxon>
        <taxon>Primates</taxon>
        <taxon>Haplorrhini</taxon>
        <taxon>Catarrhini</taxon>
        <taxon>Hominidae</taxon>
        <taxon>Homo</taxon>
    </lineage>
</organism>
<evidence type="ECO:0000250" key="1">
    <source>
        <dbReference type="UniProtKB" id="P0DP43"/>
    </source>
</evidence>
<evidence type="ECO:0000250" key="2">
    <source>
        <dbReference type="UniProtKB" id="Q91ZR5"/>
    </source>
</evidence>
<evidence type="ECO:0000255" key="3"/>
<evidence type="ECO:0000269" key="4">
    <source>
    </source>
</evidence>
<evidence type="ECO:0000269" key="5">
    <source>
    </source>
</evidence>
<evidence type="ECO:0000303" key="6">
    <source>
    </source>
</evidence>
<evidence type="ECO:0000303" key="7">
    <source>
    </source>
</evidence>
<evidence type="ECO:0000305" key="8"/>
<evidence type="ECO:0000312" key="9">
    <source>
        <dbReference type="HGNC" id="HGNC:28491"/>
    </source>
</evidence>
<reference key="1">
    <citation type="journal article" date="2004" name="Nat. Genet.">
        <title>Complete sequencing and characterization of 21,243 full-length human cDNAs.</title>
        <authorList>
            <person name="Ota T."/>
            <person name="Suzuki Y."/>
            <person name="Nishikawa T."/>
            <person name="Otsuki T."/>
            <person name="Sugiyama T."/>
            <person name="Irie R."/>
            <person name="Wakamatsu A."/>
            <person name="Hayashi K."/>
            <person name="Sato H."/>
            <person name="Nagai K."/>
            <person name="Kimura K."/>
            <person name="Makita H."/>
            <person name="Sekine M."/>
            <person name="Obayashi M."/>
            <person name="Nishi T."/>
            <person name="Shibahara T."/>
            <person name="Tanaka T."/>
            <person name="Ishii S."/>
            <person name="Yamamoto J."/>
            <person name="Saito K."/>
            <person name="Kawai Y."/>
            <person name="Isono Y."/>
            <person name="Nakamura Y."/>
            <person name="Nagahari K."/>
            <person name="Murakami K."/>
            <person name="Yasuda T."/>
            <person name="Iwayanagi T."/>
            <person name="Wagatsuma M."/>
            <person name="Shiratori A."/>
            <person name="Sudo H."/>
            <person name="Hosoiri T."/>
            <person name="Kaku Y."/>
            <person name="Kodaira H."/>
            <person name="Kondo H."/>
            <person name="Sugawara M."/>
            <person name="Takahashi M."/>
            <person name="Kanda K."/>
            <person name="Yokoi T."/>
            <person name="Furuya T."/>
            <person name="Kikkawa E."/>
            <person name="Omura Y."/>
            <person name="Abe K."/>
            <person name="Kamihara K."/>
            <person name="Katsuta N."/>
            <person name="Sato K."/>
            <person name="Tanikawa M."/>
            <person name="Yamazaki M."/>
            <person name="Ninomiya K."/>
            <person name="Ishibashi T."/>
            <person name="Yamashita H."/>
            <person name="Murakawa K."/>
            <person name="Fujimori K."/>
            <person name="Tanai H."/>
            <person name="Kimata M."/>
            <person name="Watanabe M."/>
            <person name="Hiraoka S."/>
            <person name="Chiba Y."/>
            <person name="Ishida S."/>
            <person name="Ono Y."/>
            <person name="Takiguchi S."/>
            <person name="Watanabe S."/>
            <person name="Yosida M."/>
            <person name="Hotuta T."/>
            <person name="Kusano J."/>
            <person name="Kanehori K."/>
            <person name="Takahashi-Fujii A."/>
            <person name="Hara H."/>
            <person name="Tanase T.-O."/>
            <person name="Nomura Y."/>
            <person name="Togiya S."/>
            <person name="Komai F."/>
            <person name="Hara R."/>
            <person name="Takeuchi K."/>
            <person name="Arita M."/>
            <person name="Imose N."/>
            <person name="Musashino K."/>
            <person name="Yuuki H."/>
            <person name="Oshima A."/>
            <person name="Sasaki N."/>
            <person name="Aotsuka S."/>
            <person name="Yoshikawa Y."/>
            <person name="Matsunawa H."/>
            <person name="Ichihara T."/>
            <person name="Shiohata N."/>
            <person name="Sano S."/>
            <person name="Moriya S."/>
            <person name="Momiyama H."/>
            <person name="Satoh N."/>
            <person name="Takami S."/>
            <person name="Terashima Y."/>
            <person name="Suzuki O."/>
            <person name="Nakagawa S."/>
            <person name="Senoh A."/>
            <person name="Mizoguchi H."/>
            <person name="Goto Y."/>
            <person name="Shimizu F."/>
            <person name="Wakebe H."/>
            <person name="Hishigaki H."/>
            <person name="Watanabe T."/>
            <person name="Sugiyama A."/>
            <person name="Takemoto M."/>
            <person name="Kawakami B."/>
            <person name="Yamazaki M."/>
            <person name="Watanabe K."/>
            <person name="Kumagai A."/>
            <person name="Itakura S."/>
            <person name="Fukuzumi Y."/>
            <person name="Fujimori Y."/>
            <person name="Komiyama M."/>
            <person name="Tashiro H."/>
            <person name="Tanigami A."/>
            <person name="Fujiwara T."/>
            <person name="Ono T."/>
            <person name="Yamada K."/>
            <person name="Fujii Y."/>
            <person name="Ozaki K."/>
            <person name="Hirao M."/>
            <person name="Ohmori Y."/>
            <person name="Kawabata A."/>
            <person name="Hikiji T."/>
            <person name="Kobatake N."/>
            <person name="Inagaki H."/>
            <person name="Ikema Y."/>
            <person name="Okamoto S."/>
            <person name="Okitani R."/>
            <person name="Kawakami T."/>
            <person name="Noguchi S."/>
            <person name="Itoh T."/>
            <person name="Shigeta K."/>
            <person name="Senba T."/>
            <person name="Matsumura K."/>
            <person name="Nakajima Y."/>
            <person name="Mizuno T."/>
            <person name="Morinaga M."/>
            <person name="Sasaki M."/>
            <person name="Togashi T."/>
            <person name="Oyama M."/>
            <person name="Hata H."/>
            <person name="Watanabe M."/>
            <person name="Komatsu T."/>
            <person name="Mizushima-Sugano J."/>
            <person name="Satoh T."/>
            <person name="Shirai Y."/>
            <person name="Takahashi Y."/>
            <person name="Nakagawa K."/>
            <person name="Okumura K."/>
            <person name="Nagase T."/>
            <person name="Nomura N."/>
            <person name="Kikuchi H."/>
            <person name="Masuho Y."/>
            <person name="Yamashita R."/>
            <person name="Nakai K."/>
            <person name="Yada T."/>
            <person name="Nakamura Y."/>
            <person name="Ohara O."/>
            <person name="Isogai T."/>
            <person name="Sugano S."/>
        </authorList>
    </citation>
    <scope>NUCLEOTIDE SEQUENCE [LARGE SCALE MRNA] (ISOFORMS 1 AND 3)</scope>
    <source>
        <tissue>Testis</tissue>
    </source>
</reference>
<reference key="2">
    <citation type="journal article" date="2006" name="Nature">
        <title>The DNA sequence and biological annotation of human chromosome 1.</title>
        <authorList>
            <person name="Gregory S.G."/>
            <person name="Barlow K.F."/>
            <person name="McLay K.E."/>
            <person name="Kaul R."/>
            <person name="Swarbreck D."/>
            <person name="Dunham A."/>
            <person name="Scott C.E."/>
            <person name="Howe K.L."/>
            <person name="Woodfine K."/>
            <person name="Spencer C.C.A."/>
            <person name="Jones M.C."/>
            <person name="Gillson C."/>
            <person name="Searle S."/>
            <person name="Zhou Y."/>
            <person name="Kokocinski F."/>
            <person name="McDonald L."/>
            <person name="Evans R."/>
            <person name="Phillips K."/>
            <person name="Atkinson A."/>
            <person name="Cooper R."/>
            <person name="Jones C."/>
            <person name="Hall R.E."/>
            <person name="Andrews T.D."/>
            <person name="Lloyd C."/>
            <person name="Ainscough R."/>
            <person name="Almeida J.P."/>
            <person name="Ambrose K.D."/>
            <person name="Anderson F."/>
            <person name="Andrew R.W."/>
            <person name="Ashwell R.I.S."/>
            <person name="Aubin K."/>
            <person name="Babbage A.K."/>
            <person name="Bagguley C.L."/>
            <person name="Bailey J."/>
            <person name="Beasley H."/>
            <person name="Bethel G."/>
            <person name="Bird C.P."/>
            <person name="Bray-Allen S."/>
            <person name="Brown J.Y."/>
            <person name="Brown A.J."/>
            <person name="Buckley D."/>
            <person name="Burton J."/>
            <person name="Bye J."/>
            <person name="Carder C."/>
            <person name="Chapman J.C."/>
            <person name="Clark S.Y."/>
            <person name="Clarke G."/>
            <person name="Clee C."/>
            <person name="Cobley V."/>
            <person name="Collier R.E."/>
            <person name="Corby N."/>
            <person name="Coville G.J."/>
            <person name="Davies J."/>
            <person name="Deadman R."/>
            <person name="Dunn M."/>
            <person name="Earthrowl M."/>
            <person name="Ellington A.G."/>
            <person name="Errington H."/>
            <person name="Frankish A."/>
            <person name="Frankland J."/>
            <person name="French L."/>
            <person name="Garner P."/>
            <person name="Garnett J."/>
            <person name="Gay L."/>
            <person name="Ghori M.R.J."/>
            <person name="Gibson R."/>
            <person name="Gilby L.M."/>
            <person name="Gillett W."/>
            <person name="Glithero R.J."/>
            <person name="Grafham D.V."/>
            <person name="Griffiths C."/>
            <person name="Griffiths-Jones S."/>
            <person name="Grocock R."/>
            <person name="Hammond S."/>
            <person name="Harrison E.S.I."/>
            <person name="Hart E."/>
            <person name="Haugen E."/>
            <person name="Heath P.D."/>
            <person name="Holmes S."/>
            <person name="Holt K."/>
            <person name="Howden P.J."/>
            <person name="Hunt A.R."/>
            <person name="Hunt S.E."/>
            <person name="Hunter G."/>
            <person name="Isherwood J."/>
            <person name="James R."/>
            <person name="Johnson C."/>
            <person name="Johnson D."/>
            <person name="Joy A."/>
            <person name="Kay M."/>
            <person name="Kershaw J.K."/>
            <person name="Kibukawa M."/>
            <person name="Kimberley A.M."/>
            <person name="King A."/>
            <person name="Knights A.J."/>
            <person name="Lad H."/>
            <person name="Laird G."/>
            <person name="Lawlor S."/>
            <person name="Leongamornlert D.A."/>
            <person name="Lloyd D.M."/>
            <person name="Loveland J."/>
            <person name="Lovell J."/>
            <person name="Lush M.J."/>
            <person name="Lyne R."/>
            <person name="Martin S."/>
            <person name="Mashreghi-Mohammadi M."/>
            <person name="Matthews L."/>
            <person name="Matthews N.S.W."/>
            <person name="McLaren S."/>
            <person name="Milne S."/>
            <person name="Mistry S."/>
            <person name="Moore M.J.F."/>
            <person name="Nickerson T."/>
            <person name="O'Dell C.N."/>
            <person name="Oliver K."/>
            <person name="Palmeiri A."/>
            <person name="Palmer S.A."/>
            <person name="Parker A."/>
            <person name="Patel D."/>
            <person name="Pearce A.V."/>
            <person name="Peck A.I."/>
            <person name="Pelan S."/>
            <person name="Phelps K."/>
            <person name="Phillimore B.J."/>
            <person name="Plumb R."/>
            <person name="Rajan J."/>
            <person name="Raymond C."/>
            <person name="Rouse G."/>
            <person name="Saenphimmachak C."/>
            <person name="Sehra H.K."/>
            <person name="Sheridan E."/>
            <person name="Shownkeen R."/>
            <person name="Sims S."/>
            <person name="Skuce C.D."/>
            <person name="Smith M."/>
            <person name="Steward C."/>
            <person name="Subramanian S."/>
            <person name="Sycamore N."/>
            <person name="Tracey A."/>
            <person name="Tromans A."/>
            <person name="Van Helmond Z."/>
            <person name="Wall M."/>
            <person name="Wallis J.M."/>
            <person name="White S."/>
            <person name="Whitehead S.L."/>
            <person name="Wilkinson J.E."/>
            <person name="Willey D.L."/>
            <person name="Williams H."/>
            <person name="Wilming L."/>
            <person name="Wray P.W."/>
            <person name="Wu Z."/>
            <person name="Coulson A."/>
            <person name="Vaudin M."/>
            <person name="Sulston J.E."/>
            <person name="Durbin R.M."/>
            <person name="Hubbard T."/>
            <person name="Wooster R."/>
            <person name="Dunham I."/>
            <person name="Carter N.P."/>
            <person name="McVean G."/>
            <person name="Ross M.T."/>
            <person name="Harrow J."/>
            <person name="Olson M.V."/>
            <person name="Beck S."/>
            <person name="Rogers J."/>
            <person name="Bentley D.R."/>
        </authorList>
    </citation>
    <scope>NUCLEOTIDE SEQUENCE [LARGE SCALE GENOMIC DNA]</scope>
</reference>
<reference key="3">
    <citation type="submission" date="2005-07" db="EMBL/GenBank/DDBJ databases">
        <authorList>
            <person name="Mural R.J."/>
            <person name="Istrail S."/>
            <person name="Sutton G.G."/>
            <person name="Florea L."/>
            <person name="Halpern A.L."/>
            <person name="Mobarry C.M."/>
            <person name="Lippert R."/>
            <person name="Walenz B."/>
            <person name="Shatkay H."/>
            <person name="Dew I."/>
            <person name="Miller J.R."/>
            <person name="Flanigan M.J."/>
            <person name="Edwards N.J."/>
            <person name="Bolanos R."/>
            <person name="Fasulo D."/>
            <person name="Halldorsson B.V."/>
            <person name="Hannenhalli S."/>
            <person name="Turner R."/>
            <person name="Yooseph S."/>
            <person name="Lu F."/>
            <person name="Nusskern D.R."/>
            <person name="Shue B.C."/>
            <person name="Zheng X.H."/>
            <person name="Zhong F."/>
            <person name="Delcher A.L."/>
            <person name="Huson D.H."/>
            <person name="Kravitz S.A."/>
            <person name="Mouchard L."/>
            <person name="Reinert K."/>
            <person name="Remington K.A."/>
            <person name="Clark A.G."/>
            <person name="Waterman M.S."/>
            <person name="Eichler E.E."/>
            <person name="Adams M.D."/>
            <person name="Hunkapiller M.W."/>
            <person name="Myers E.W."/>
            <person name="Venter J.C."/>
        </authorList>
    </citation>
    <scope>NUCLEOTIDE SEQUENCE [LARGE SCALE GENOMIC DNA]</scope>
</reference>
<reference key="4">
    <citation type="journal article" date="2004" name="Genome Res.">
        <title>The status, quality, and expansion of the NIH full-length cDNA project: the Mammalian Gene Collection (MGC).</title>
        <authorList>
            <consortium name="The MGC Project Team"/>
        </authorList>
    </citation>
    <scope>NUCLEOTIDE SEQUENCE [LARGE SCALE MRNA] (ISOFORMS 1 AND 2)</scope>
    <source>
        <tissue>Testis</tissue>
    </source>
</reference>
<reference key="5">
    <citation type="journal article" date="2006" name="Science">
        <title>The consensus coding sequences of human breast and colorectal cancers.</title>
        <authorList>
            <person name="Sjoeblom T."/>
            <person name="Jones S."/>
            <person name="Wood L.D."/>
            <person name="Parsons D.W."/>
            <person name="Lin J."/>
            <person name="Barber T.D."/>
            <person name="Mandelker D."/>
            <person name="Leary R.J."/>
            <person name="Ptak J."/>
            <person name="Silliman N."/>
            <person name="Szabo S."/>
            <person name="Buckhaults P."/>
            <person name="Farrell C."/>
            <person name="Meeh P."/>
            <person name="Markowitz S.D."/>
            <person name="Willis J."/>
            <person name="Dawson D."/>
            <person name="Willson J.K.V."/>
            <person name="Gazdar A.F."/>
            <person name="Hartigan J."/>
            <person name="Wu L."/>
            <person name="Liu C."/>
            <person name="Parmigiani G."/>
            <person name="Park B.H."/>
            <person name="Bachman K.E."/>
            <person name="Papadopoulos N."/>
            <person name="Vogelstein B."/>
            <person name="Kinzler K.W."/>
            <person name="Velculescu V.E."/>
        </authorList>
    </citation>
    <scope>VARIANT [LARGE SCALE ANALYSIS] ILE-653</scope>
</reference>
<reference key="6">
    <citation type="journal article" date="2017" name="Elife">
        <title>CatSperzeta regulates the structural continuity of sperm Ca(2+) signaling domains and is required for normal fertility.</title>
        <authorList>
            <person name="Chung J.J."/>
            <person name="Miki K."/>
            <person name="Kim D."/>
            <person name="Shim S.H."/>
            <person name="Shi H.F."/>
            <person name="Hwang J.Y."/>
            <person name="Cai X."/>
            <person name="Iseri Y."/>
            <person name="Zhuang X."/>
            <person name="Clapham D.E."/>
        </authorList>
    </citation>
    <scope>SUBCELLULAR LOCATION</scope>
</reference>
<name>CTSRE_HUMAN</name>
<accession>Q5SY80</accession>
<accession>B4DZR4</accession>
<accession>B7Z7X5</accession>
<accession>E9PEA3</accession>
<accession>Q8IYZ6</accession>
<comment type="function">
    <text evidence="1">Auxiliary component of the CatSper complex, a complex involved in sperm cell hyperactivation. Sperm cell hyperactivation is needed for sperm motility which is essential late in the preparation of sperm for fertilization.</text>
</comment>
<comment type="subunit">
    <text evidence="1 2">Component of the CatSper complex or CatSpermasome composed of the core pore-forming members CATSPER1, CATSPER2, CATSPER3 and CATSPER4 as well as auxiliary members CATSPERB, CATSPERG, CATSPERD, CATSPERE, CATSPERZ, C2CD6/CATSPERT, TMEM249, TMEM262 and EFCAB9 (By similarity). HSPA1 may be an additional auxiliary complex member (By similarity). The core complex members CATSPER1, CATSPER2, CATSPER3 and CATSPER4 form a heterotetrameric channel. The auxiliary CATSPERB, CATSPERG, CATSPERD and CATSPERE subunits form a pavilion-like structure over the pore which stabilizes the complex through interactions with CATSPER4, CATSPER3, CATSPER1 and CATSPER2 respectively. TMEM262/CATSPERH interacts with CATSPERB, further stabilizing the complex. C2CD6/CATSPERT interacts at least with CATSPERD and is required for targeting the CatSper complex in the flagellar membrane (By similarity).</text>
</comment>
<comment type="subcellular location">
    <subcellularLocation>
        <location evidence="5">Cell projection</location>
        <location evidence="5">Cilium</location>
        <location evidence="5">Flagellum membrane</location>
        <topology evidence="3">Single-pass type I membrane protein</topology>
    </subcellularLocation>
    <text evidence="5">Specifically located in the principal piece of sperm tail.</text>
</comment>
<comment type="alternative products">
    <event type="alternative splicing"/>
    <isoform>
        <id>Q5SY80-1</id>
        <name>1</name>
        <sequence type="displayed"/>
    </isoform>
    <isoform>
        <id>Q5SY80-2</id>
        <name>2</name>
        <sequence type="described" ref="VSP_020748 VSP_020749"/>
    </isoform>
    <isoform>
        <id>Q5SY80-3</id>
        <name>3</name>
        <sequence type="described" ref="VSP_044251"/>
    </isoform>
</comment>
<comment type="similarity">
    <text evidence="8">Belongs to the CATSPERD family.</text>
</comment>
<comment type="caution">
    <text evidence="8">In mouse, Slco6c1 is an additional auxiliary subunit of the CatSper complex. It is unclear if the related SLCO6A1 protein performs the same role in non-rodent species.</text>
</comment>
<comment type="sequence caution" evidence="8">
    <conflict type="frameshift">
        <sequence resource="EMBL" id="BC028392"/>
    </conflict>
</comment>
<dbReference type="EMBL" id="AK302609">
    <property type="protein sequence ID" value="BAH13761.1"/>
    <property type="molecule type" value="mRNA"/>
</dbReference>
<dbReference type="EMBL" id="AK303059">
    <property type="protein sequence ID" value="BAG64176.1"/>
    <property type="molecule type" value="mRNA"/>
</dbReference>
<dbReference type="EMBL" id="AC099757">
    <property type="status" value="NOT_ANNOTATED_CDS"/>
    <property type="molecule type" value="Genomic_DNA"/>
</dbReference>
<dbReference type="EMBL" id="AL591594">
    <property type="status" value="NOT_ANNOTATED_CDS"/>
    <property type="molecule type" value="Genomic_DNA"/>
</dbReference>
<dbReference type="EMBL" id="CH471148">
    <property type="protein sequence ID" value="EAW77109.1"/>
    <property type="molecule type" value="Genomic_DNA"/>
</dbReference>
<dbReference type="EMBL" id="BC032859">
    <property type="protein sequence ID" value="AAH32859.1"/>
    <property type="molecule type" value="mRNA"/>
</dbReference>
<dbReference type="EMBL" id="BC028392">
    <property type="status" value="NOT_ANNOTATED_CDS"/>
    <property type="molecule type" value="mRNA"/>
</dbReference>
<dbReference type="CCDS" id="CCDS1625.1">
    <molecule id="Q5SY80-2"/>
</dbReference>
<dbReference type="CCDS" id="CCDS44340.1">
    <molecule id="Q5SY80-1"/>
</dbReference>
<dbReference type="CCDS" id="CCDS55693.1">
    <molecule id="Q5SY80-3"/>
</dbReference>
<dbReference type="RefSeq" id="NP_001124429.1">
    <molecule id="Q5SY80-1"/>
    <property type="nucleotide sequence ID" value="NM_001130957.2"/>
</dbReference>
<dbReference type="RefSeq" id="NP_001229269.1">
    <molecule id="Q5SY80-3"/>
    <property type="nucleotide sequence ID" value="NM_001242340.2"/>
</dbReference>
<dbReference type="RefSeq" id="NP_776168.1">
    <molecule id="Q5SY80-2"/>
    <property type="nucleotide sequence ID" value="NM_173807.5"/>
</dbReference>
<dbReference type="RefSeq" id="XP_011542441.1">
    <property type="nucleotide sequence ID" value="XM_011544139.2"/>
</dbReference>
<dbReference type="RefSeq" id="XP_011542444.1">
    <molecule id="Q5SY80-3"/>
    <property type="nucleotide sequence ID" value="XM_011544142.4"/>
</dbReference>
<dbReference type="RefSeq" id="XP_011542451.1">
    <property type="nucleotide sequence ID" value="XM_011544149.2"/>
</dbReference>
<dbReference type="RefSeq" id="XP_016856435.1">
    <molecule id="Q5SY80-3"/>
    <property type="nucleotide sequence ID" value="XM_017000946.3"/>
</dbReference>
<dbReference type="RefSeq" id="XP_016856438.1">
    <property type="nucleotide sequence ID" value="XM_017000949.1"/>
</dbReference>
<dbReference type="RefSeq" id="XP_016856439.1">
    <property type="nucleotide sequence ID" value="XM_017000950.1"/>
</dbReference>
<dbReference type="RefSeq" id="XP_024302046.1">
    <molecule id="Q5SY80-3"/>
    <property type="nucleotide sequence ID" value="XM_024446278.2"/>
</dbReference>
<dbReference type="RefSeq" id="XP_047273071.1">
    <molecule id="Q5SY80-3"/>
    <property type="nucleotide sequence ID" value="XM_047417115.1"/>
</dbReference>
<dbReference type="RefSeq" id="XP_054191791.1">
    <molecule id="Q5SY80-3"/>
    <property type="nucleotide sequence ID" value="XM_054335816.1"/>
</dbReference>
<dbReference type="RefSeq" id="XP_054191795.1">
    <molecule id="Q5SY80-3"/>
    <property type="nucleotide sequence ID" value="XM_054335820.1"/>
</dbReference>
<dbReference type="RefSeq" id="XP_054191798.1">
    <molecule id="Q5SY80-3"/>
    <property type="nucleotide sequence ID" value="XM_054335823.1"/>
</dbReference>
<dbReference type="RefSeq" id="XP_054191799.1">
    <molecule id="Q5SY80-3"/>
    <property type="nucleotide sequence ID" value="XM_054335824.1"/>
</dbReference>
<dbReference type="SMR" id="Q5SY80"/>
<dbReference type="BioGRID" id="129192">
    <property type="interactions" value="8"/>
</dbReference>
<dbReference type="ComplexPortal" id="CPX-9165">
    <property type="entry name" value="CatSpermasome complex"/>
</dbReference>
<dbReference type="FunCoup" id="Q5SY80">
    <property type="interactions" value="19"/>
</dbReference>
<dbReference type="IntAct" id="Q5SY80">
    <property type="interactions" value="7"/>
</dbReference>
<dbReference type="STRING" id="9606.ENSP00000355492"/>
<dbReference type="GlyCosmos" id="Q5SY80">
    <property type="glycosylation" value="11 sites, No reported glycans"/>
</dbReference>
<dbReference type="GlyGen" id="Q5SY80">
    <property type="glycosylation" value="12 sites, 1 O-linked glycan (1 site)"/>
</dbReference>
<dbReference type="iPTMnet" id="Q5SY80"/>
<dbReference type="PhosphoSitePlus" id="Q5SY80"/>
<dbReference type="BioMuta" id="CATSPERE"/>
<dbReference type="DMDM" id="74744048"/>
<dbReference type="jPOST" id="Q5SY80"/>
<dbReference type="MassIVE" id="Q5SY80"/>
<dbReference type="PaxDb" id="9606-ENSP00000355492"/>
<dbReference type="PeptideAtlas" id="Q5SY80"/>
<dbReference type="ProteomicsDB" id="5618"/>
<dbReference type="ProteomicsDB" id="64019">
    <molecule id="Q5SY80-1"/>
</dbReference>
<dbReference type="ProteomicsDB" id="64020">
    <molecule id="Q5SY80-2"/>
</dbReference>
<dbReference type="Antibodypedia" id="68517">
    <property type="antibodies" value="41 antibodies from 9 providers"/>
</dbReference>
<dbReference type="DNASU" id="257044"/>
<dbReference type="Ensembl" id="ENST00000366531.7">
    <molecule id="Q5SY80-3"/>
    <property type="protein sequence ID" value="ENSP00000355489.3"/>
    <property type="gene ID" value="ENSG00000179397.18"/>
</dbReference>
<dbReference type="Ensembl" id="ENST00000366533.8">
    <molecule id="Q5SY80-2"/>
    <property type="protein sequence ID" value="ENSP00000355491.4"/>
    <property type="gene ID" value="ENSG00000179397.18"/>
</dbReference>
<dbReference type="Ensembl" id="ENST00000366534.9">
    <molecule id="Q5SY80-1"/>
    <property type="protein sequence ID" value="ENSP00000355492.4"/>
    <property type="gene ID" value="ENSG00000179397.18"/>
</dbReference>
<dbReference type="GeneID" id="257044"/>
<dbReference type="KEGG" id="hsa:257044"/>
<dbReference type="MANE-Select" id="ENST00000366534.9">
    <property type="protein sequence ID" value="ENSP00000355492.4"/>
    <property type="RefSeq nucleotide sequence ID" value="NM_001130957.2"/>
    <property type="RefSeq protein sequence ID" value="NP_001124429.1"/>
</dbReference>
<dbReference type="UCSC" id="uc001ial.4">
    <molecule id="Q5SY80-1"/>
    <property type="organism name" value="human"/>
</dbReference>
<dbReference type="AGR" id="HGNC:28491"/>
<dbReference type="CTD" id="257044"/>
<dbReference type="DisGeNET" id="257044"/>
<dbReference type="GeneCards" id="CATSPERE"/>
<dbReference type="HGNC" id="HGNC:28491">
    <property type="gene designation" value="CATSPERE"/>
</dbReference>
<dbReference type="HPA" id="ENSG00000179397">
    <property type="expression patterns" value="Tissue enriched (testis)"/>
</dbReference>
<dbReference type="MIM" id="617510">
    <property type="type" value="gene"/>
</dbReference>
<dbReference type="neXtProt" id="NX_Q5SY80"/>
<dbReference type="OpenTargets" id="ENSG00000179397"/>
<dbReference type="PharmGKB" id="PA142672485"/>
<dbReference type="VEuPathDB" id="HostDB:ENSG00000179397"/>
<dbReference type="eggNOG" id="ENOG502R8SD">
    <property type="taxonomic scope" value="Eukaryota"/>
</dbReference>
<dbReference type="GeneTree" id="ENSGT00940000162691"/>
<dbReference type="HOGENOM" id="CLU_014273_0_0_1"/>
<dbReference type="InParanoid" id="Q5SY80"/>
<dbReference type="OMA" id="YRHCFSY"/>
<dbReference type="OrthoDB" id="5968869at2759"/>
<dbReference type="PAN-GO" id="Q5SY80">
    <property type="GO annotations" value="4 GO annotations based on evolutionary models"/>
</dbReference>
<dbReference type="PhylomeDB" id="Q5SY80"/>
<dbReference type="TreeFam" id="TF336183"/>
<dbReference type="PathwayCommons" id="Q5SY80"/>
<dbReference type="SignaLink" id="Q5SY80"/>
<dbReference type="BioGRID-ORCS" id="257044">
    <property type="hits" value="6 hits in 1133 CRISPR screens"/>
</dbReference>
<dbReference type="ChiTaRS" id="C1orf101">
    <property type="organism name" value="human"/>
</dbReference>
<dbReference type="GenomeRNAi" id="257044"/>
<dbReference type="Pharos" id="Q5SY80">
    <property type="development level" value="Tdark"/>
</dbReference>
<dbReference type="PRO" id="PR:Q5SY80"/>
<dbReference type="Proteomes" id="UP000005640">
    <property type="component" value="Chromosome 1"/>
</dbReference>
<dbReference type="RNAct" id="Q5SY80">
    <property type="molecule type" value="protein"/>
</dbReference>
<dbReference type="Bgee" id="ENSG00000179397">
    <property type="expression patterns" value="Expressed in primordial germ cell in gonad and 104 other cell types or tissues"/>
</dbReference>
<dbReference type="ExpressionAtlas" id="Q5SY80">
    <property type="expression patterns" value="baseline and differential"/>
</dbReference>
<dbReference type="GO" id="GO:0036128">
    <property type="term" value="C:CatSper complex"/>
    <property type="evidence" value="ECO:0000250"/>
    <property type="project" value="UniProtKB"/>
</dbReference>
<dbReference type="GO" id="GO:0097228">
    <property type="term" value="C:sperm principal piece"/>
    <property type="evidence" value="ECO:0000314"/>
    <property type="project" value="UniProtKB"/>
</dbReference>
<dbReference type="GO" id="GO:0030317">
    <property type="term" value="P:flagellated sperm motility"/>
    <property type="evidence" value="ECO:0000318"/>
    <property type="project" value="GO_Central"/>
</dbReference>
<dbReference type="GO" id="GO:0048240">
    <property type="term" value="P:sperm capacitation"/>
    <property type="evidence" value="ECO:0000318"/>
    <property type="project" value="GO_Central"/>
</dbReference>
<dbReference type="InterPro" id="IPR028751">
    <property type="entry name" value="CATSPERD/E"/>
</dbReference>
<dbReference type="InterPro" id="IPR053814">
    <property type="entry name" value="CATSPERD/E_C"/>
</dbReference>
<dbReference type="InterPro" id="IPR053816">
    <property type="entry name" value="CATSPERE_b-prop"/>
</dbReference>
<dbReference type="InterPro" id="IPR053815">
    <property type="entry name" value="CATSPERE_Ig-like"/>
</dbReference>
<dbReference type="InterPro" id="IPR053818">
    <property type="entry name" value="CATSPERE_NTD1"/>
</dbReference>
<dbReference type="InterPro" id="IPR053817">
    <property type="entry name" value="CATSPERE_NTD2"/>
</dbReference>
<dbReference type="PANTHER" id="PTHR33722:SF3">
    <property type="entry name" value="CATION CHANNEL SPERM-ASSOCIATED AUXILIARY SUBUNIT EPSILON"/>
    <property type="match status" value="1"/>
</dbReference>
<dbReference type="PANTHER" id="PTHR33722">
    <property type="entry name" value="CATION CHANNEL SPERM-ASSOCIATED PROTEIN SUBUNIT DELTA-RELATED"/>
    <property type="match status" value="1"/>
</dbReference>
<dbReference type="Pfam" id="PF22844">
    <property type="entry name" value="Beta-prop_CATSPERE"/>
    <property type="match status" value="1"/>
</dbReference>
<dbReference type="Pfam" id="PF22850">
    <property type="entry name" value="CATSPERD-E_C"/>
    <property type="match status" value="1"/>
</dbReference>
<dbReference type="Pfam" id="PF22849">
    <property type="entry name" value="CATSPERE_Ig-like"/>
    <property type="match status" value="1"/>
</dbReference>
<dbReference type="Pfam" id="PF22841">
    <property type="entry name" value="CATSPERE_NTD1"/>
    <property type="match status" value="1"/>
</dbReference>
<dbReference type="Pfam" id="PF22843">
    <property type="entry name" value="CATSPERE_NTD2"/>
    <property type="match status" value="1"/>
</dbReference>
<protein>
    <recommendedName>
        <fullName evidence="9">Cation channel sperm-associated auxiliary subunit epsilon</fullName>
        <shortName evidence="1">CatSper-epsilon</shortName>
        <shortName evidence="1">CatSperepsilon</shortName>
    </recommendedName>
</protein>